<organism>
    <name type="scientific">Methanosphaera stadtmanae (strain ATCC 43021 / DSM 3091 / JCM 11832 / MCB-3)</name>
    <dbReference type="NCBI Taxonomy" id="339860"/>
    <lineage>
        <taxon>Archaea</taxon>
        <taxon>Methanobacteriati</taxon>
        <taxon>Methanobacteriota</taxon>
        <taxon>Methanomada group</taxon>
        <taxon>Methanobacteria</taxon>
        <taxon>Methanobacteriales</taxon>
        <taxon>Methanobacteriaceae</taxon>
        <taxon>Methanosphaera</taxon>
    </lineage>
</organism>
<accession>Q2NGI3</accession>
<comment type="function">
    <text evidence="3">Catalyzes the reversible oxidation of malate to oxaloacetate.</text>
</comment>
<comment type="catalytic activity">
    <reaction evidence="3">
        <text>(S)-malate + NADP(+) = oxaloacetate + NADPH + H(+)</text>
        <dbReference type="Rhea" id="RHEA:10824"/>
        <dbReference type="ChEBI" id="CHEBI:15378"/>
        <dbReference type="ChEBI" id="CHEBI:15589"/>
        <dbReference type="ChEBI" id="CHEBI:16452"/>
        <dbReference type="ChEBI" id="CHEBI:57783"/>
        <dbReference type="ChEBI" id="CHEBI:58349"/>
        <dbReference type="EC" id="1.1.1.299"/>
    </reaction>
</comment>
<comment type="catalytic activity">
    <reaction evidence="3">
        <text>(S)-malate + NAD(+) = oxaloacetate + NADH + H(+)</text>
        <dbReference type="Rhea" id="RHEA:21432"/>
        <dbReference type="ChEBI" id="CHEBI:15378"/>
        <dbReference type="ChEBI" id="CHEBI:15589"/>
        <dbReference type="ChEBI" id="CHEBI:16452"/>
        <dbReference type="ChEBI" id="CHEBI:57540"/>
        <dbReference type="ChEBI" id="CHEBI:57945"/>
        <dbReference type="EC" id="1.1.1.299"/>
    </reaction>
</comment>
<comment type="similarity">
    <text evidence="4">Belongs to the LDH/MDH superfamily.</text>
</comment>
<evidence type="ECO:0000250" key="1">
    <source>
        <dbReference type="UniProtKB" id="P61889"/>
    </source>
</evidence>
<evidence type="ECO:0000250" key="2">
    <source>
        <dbReference type="UniProtKB" id="Q60176"/>
    </source>
</evidence>
<evidence type="ECO:0000250" key="3">
    <source>
        <dbReference type="UniProtKB" id="Q9YEA1"/>
    </source>
</evidence>
<evidence type="ECO:0000305" key="4"/>
<dbReference type="EC" id="1.1.1.299" evidence="3"/>
<dbReference type="EMBL" id="CP000102">
    <property type="protein sequence ID" value="ABC57070.1"/>
    <property type="molecule type" value="Genomic_DNA"/>
</dbReference>
<dbReference type="RefSeq" id="WP_011406270.1">
    <property type="nucleotide sequence ID" value="NC_007681.1"/>
</dbReference>
<dbReference type="SMR" id="Q2NGI3"/>
<dbReference type="STRING" id="339860.Msp_0672"/>
<dbReference type="GeneID" id="3855860"/>
<dbReference type="KEGG" id="mst:Msp_0672"/>
<dbReference type="eggNOG" id="arCOG00246">
    <property type="taxonomic scope" value="Archaea"/>
</dbReference>
<dbReference type="HOGENOM" id="CLU_045401_2_1_2"/>
<dbReference type="Proteomes" id="UP000001931">
    <property type="component" value="Chromosome"/>
</dbReference>
<dbReference type="GO" id="GO:0004459">
    <property type="term" value="F:L-lactate dehydrogenase activity"/>
    <property type="evidence" value="ECO:0007669"/>
    <property type="project" value="TreeGrafter"/>
</dbReference>
<dbReference type="GO" id="GO:0030060">
    <property type="term" value="F:L-malate dehydrogenase (NAD+) activity"/>
    <property type="evidence" value="ECO:0007669"/>
    <property type="project" value="RHEA"/>
</dbReference>
<dbReference type="GO" id="GO:0046554">
    <property type="term" value="F:L-malate dehydrogenase (NADP+) activity"/>
    <property type="evidence" value="ECO:0007669"/>
    <property type="project" value="RHEA"/>
</dbReference>
<dbReference type="GO" id="GO:0006089">
    <property type="term" value="P:lactate metabolic process"/>
    <property type="evidence" value="ECO:0007669"/>
    <property type="project" value="TreeGrafter"/>
</dbReference>
<dbReference type="GO" id="GO:0006099">
    <property type="term" value="P:tricarboxylic acid cycle"/>
    <property type="evidence" value="ECO:0007669"/>
    <property type="project" value="UniProtKB-KW"/>
</dbReference>
<dbReference type="CDD" id="cd05294">
    <property type="entry name" value="LDH-like_MDH_nadp"/>
    <property type="match status" value="1"/>
</dbReference>
<dbReference type="Gene3D" id="3.90.110.10">
    <property type="entry name" value="Lactate dehydrogenase/glycoside hydrolase, family 4, C-terminal"/>
    <property type="match status" value="1"/>
</dbReference>
<dbReference type="Gene3D" id="3.40.50.720">
    <property type="entry name" value="NAD(P)-binding Rossmann-like Domain"/>
    <property type="match status" value="1"/>
</dbReference>
<dbReference type="InterPro" id="IPR001557">
    <property type="entry name" value="L-lactate/malate_DH"/>
</dbReference>
<dbReference type="InterPro" id="IPR022383">
    <property type="entry name" value="Lactate/malate_DH_C"/>
</dbReference>
<dbReference type="InterPro" id="IPR001236">
    <property type="entry name" value="Lactate/malate_DH_N"/>
</dbReference>
<dbReference type="InterPro" id="IPR015955">
    <property type="entry name" value="Lactate_DH/Glyco_Ohase_4_C"/>
</dbReference>
<dbReference type="InterPro" id="IPR036291">
    <property type="entry name" value="NAD(P)-bd_dom_sf"/>
</dbReference>
<dbReference type="NCBIfam" id="NF004863">
    <property type="entry name" value="PRK06223.1"/>
    <property type="match status" value="1"/>
</dbReference>
<dbReference type="PANTHER" id="PTHR43128">
    <property type="entry name" value="L-2-HYDROXYCARBOXYLATE DEHYDROGENASE (NAD(P)(+))"/>
    <property type="match status" value="1"/>
</dbReference>
<dbReference type="PANTHER" id="PTHR43128:SF16">
    <property type="entry name" value="L-LACTATE DEHYDROGENASE"/>
    <property type="match status" value="1"/>
</dbReference>
<dbReference type="Pfam" id="PF02866">
    <property type="entry name" value="Ldh_1_C"/>
    <property type="match status" value="1"/>
</dbReference>
<dbReference type="Pfam" id="PF00056">
    <property type="entry name" value="Ldh_1_N"/>
    <property type="match status" value="1"/>
</dbReference>
<dbReference type="PIRSF" id="PIRSF000102">
    <property type="entry name" value="Lac_mal_DH"/>
    <property type="match status" value="1"/>
</dbReference>
<dbReference type="PRINTS" id="PR00086">
    <property type="entry name" value="LLDHDRGNASE"/>
</dbReference>
<dbReference type="SUPFAM" id="SSF56327">
    <property type="entry name" value="LDH C-terminal domain-like"/>
    <property type="match status" value="1"/>
</dbReference>
<dbReference type="SUPFAM" id="SSF51735">
    <property type="entry name" value="NAD(P)-binding Rossmann-fold domains"/>
    <property type="match status" value="1"/>
</dbReference>
<reference key="1">
    <citation type="journal article" date="2006" name="J. Bacteriol.">
        <title>The genome sequence of Methanosphaera stadtmanae reveals why this human intestinal archaeon is restricted to methanol and H2 for methane formation and ATP synthesis.</title>
        <authorList>
            <person name="Fricke W.F."/>
            <person name="Seedorf H."/>
            <person name="Henne A."/>
            <person name="Kruer M."/>
            <person name="Liesegang H."/>
            <person name="Hedderich R."/>
            <person name="Gottschalk G."/>
            <person name="Thauer R.K."/>
        </authorList>
    </citation>
    <scope>NUCLEOTIDE SEQUENCE [LARGE SCALE GENOMIC DNA]</scope>
    <source>
        <strain>ATCC 43021 / DSM 3091 / JCM 11832 / MCB-3</strain>
    </source>
</reference>
<feature type="chain" id="PRO_0000241971" description="Malate dehydrogenase">
    <location>
        <begin position="1"/>
        <end position="317"/>
    </location>
</feature>
<feature type="active site" description="Proton acceptor" evidence="1">
    <location>
        <position position="178"/>
    </location>
</feature>
<feature type="binding site" evidence="2">
    <location>
        <begin position="8"/>
        <end position="14"/>
    </location>
    <ligand>
        <name>NADP(+)</name>
        <dbReference type="ChEBI" id="CHEBI:58349"/>
    </ligand>
</feature>
<feature type="binding site" evidence="1">
    <location>
        <position position="85"/>
    </location>
    <ligand>
        <name>substrate</name>
    </ligand>
</feature>
<feature type="binding site" evidence="1">
    <location>
        <position position="91"/>
    </location>
    <ligand>
        <name>substrate</name>
    </ligand>
</feature>
<feature type="binding site" evidence="2">
    <location>
        <position position="98"/>
    </location>
    <ligand>
        <name>NADP(+)</name>
        <dbReference type="ChEBI" id="CHEBI:58349"/>
    </ligand>
</feature>
<feature type="binding site" evidence="2">
    <location>
        <begin position="121"/>
        <end position="123"/>
    </location>
    <ligand>
        <name>NADP(+)</name>
        <dbReference type="ChEBI" id="CHEBI:58349"/>
    </ligand>
</feature>
<feature type="binding site" evidence="1">
    <location>
        <position position="123"/>
    </location>
    <ligand>
        <name>substrate</name>
    </ligand>
</feature>
<feature type="binding site" evidence="1">
    <location>
        <position position="154"/>
    </location>
    <ligand>
        <name>substrate</name>
    </ligand>
</feature>
<proteinExistence type="inferred from homology"/>
<sequence length="317" mass="34857">MVKITIMGASGTIGKTVAFNLAEKDVIDEIIMFSRPASHERVKGEILDMYDALAAEDIDCELKASSDYADLAGSSIVLITSGVPRKEGMSRLDLAVPNSKIVQEYSKQIAIHAPDSVILIVTNPVDVMTSIALKTSGFDKKRVIGLGNHLDSLRLKTLLSKHFHINSREIHTRVIGEHGDHMVPLLSSTTIGGILLKSFVEYMDLDVPKLVETLKNSGNNIISKKGATEYGPSYAISNLILTIANDTRKILTVSTYLEGEVEGVYDVSLGVPVILCKHGIKRIVPLKMNDEERTEFFDAARTVKKTTYELEKMLNKE</sequence>
<name>MDH_METST</name>
<protein>
    <recommendedName>
        <fullName evidence="3">Malate dehydrogenase</fullName>
        <ecNumber evidence="3">1.1.1.299</ecNumber>
    </recommendedName>
</protein>
<keyword id="KW-0520">NAD</keyword>
<keyword id="KW-0521">NADP</keyword>
<keyword id="KW-0560">Oxidoreductase</keyword>
<keyword id="KW-1185">Reference proteome</keyword>
<keyword id="KW-0816">Tricarboxylic acid cycle</keyword>
<gene>
    <name type="primary">mdh</name>
    <name type="ordered locus">Msp_0672</name>
</gene>